<organism>
    <name type="scientific">Maricaulis maris (strain MCS10)</name>
    <name type="common">Caulobacter maris</name>
    <dbReference type="NCBI Taxonomy" id="394221"/>
    <lineage>
        <taxon>Bacteria</taxon>
        <taxon>Pseudomonadati</taxon>
        <taxon>Pseudomonadota</taxon>
        <taxon>Alphaproteobacteria</taxon>
        <taxon>Maricaulales</taxon>
        <taxon>Maricaulaceae</taxon>
        <taxon>Maricaulis</taxon>
    </lineage>
</organism>
<evidence type="ECO:0000255" key="1">
    <source>
        <dbReference type="HAMAP-Rule" id="MF_00145"/>
    </source>
</evidence>
<proteinExistence type="inferred from homology"/>
<protein>
    <recommendedName>
        <fullName evidence="1">Phosphoglycerate kinase</fullName>
        <ecNumber evidence="1">2.7.2.3</ecNumber>
    </recommendedName>
</protein>
<feature type="chain" id="PRO_1000058013" description="Phosphoglycerate kinase">
    <location>
        <begin position="1"/>
        <end position="403"/>
    </location>
</feature>
<feature type="binding site" evidence="1">
    <location>
        <begin position="22"/>
        <end position="24"/>
    </location>
    <ligand>
        <name>substrate</name>
    </ligand>
</feature>
<feature type="binding site" evidence="1">
    <location>
        <position position="37"/>
    </location>
    <ligand>
        <name>substrate</name>
    </ligand>
</feature>
<feature type="binding site" evidence="1">
    <location>
        <begin position="60"/>
        <end position="63"/>
    </location>
    <ligand>
        <name>substrate</name>
    </ligand>
</feature>
<feature type="binding site" evidence="1">
    <location>
        <position position="119"/>
    </location>
    <ligand>
        <name>substrate</name>
    </ligand>
</feature>
<feature type="binding site" evidence="1">
    <location>
        <position position="152"/>
    </location>
    <ligand>
        <name>substrate</name>
    </ligand>
</feature>
<feature type="binding site" evidence="1">
    <location>
        <position position="202"/>
    </location>
    <ligand>
        <name>ATP</name>
        <dbReference type="ChEBI" id="CHEBI:30616"/>
    </ligand>
</feature>
<feature type="binding site" evidence="1">
    <location>
        <position position="324"/>
    </location>
    <ligand>
        <name>ATP</name>
        <dbReference type="ChEBI" id="CHEBI:30616"/>
    </ligand>
</feature>
<feature type="binding site" evidence="1">
    <location>
        <begin position="354"/>
        <end position="357"/>
    </location>
    <ligand>
        <name>ATP</name>
        <dbReference type="ChEBI" id="CHEBI:30616"/>
    </ligand>
</feature>
<comment type="catalytic activity">
    <reaction evidence="1">
        <text>(2R)-3-phosphoglycerate + ATP = (2R)-3-phospho-glyceroyl phosphate + ADP</text>
        <dbReference type="Rhea" id="RHEA:14801"/>
        <dbReference type="ChEBI" id="CHEBI:30616"/>
        <dbReference type="ChEBI" id="CHEBI:57604"/>
        <dbReference type="ChEBI" id="CHEBI:58272"/>
        <dbReference type="ChEBI" id="CHEBI:456216"/>
        <dbReference type="EC" id="2.7.2.3"/>
    </reaction>
</comment>
<comment type="pathway">
    <text evidence="1">Carbohydrate degradation; glycolysis; pyruvate from D-glyceraldehyde 3-phosphate: step 2/5.</text>
</comment>
<comment type="subunit">
    <text evidence="1">Monomer.</text>
</comment>
<comment type="subcellular location">
    <subcellularLocation>
        <location evidence="1">Cytoplasm</location>
    </subcellularLocation>
</comment>
<comment type="similarity">
    <text evidence="1">Belongs to the phosphoglycerate kinase family.</text>
</comment>
<name>PGK_MARMM</name>
<gene>
    <name evidence="1" type="primary">pgk</name>
    <name type="ordered locus">Mmar10_2596</name>
</gene>
<keyword id="KW-0067">ATP-binding</keyword>
<keyword id="KW-0963">Cytoplasm</keyword>
<keyword id="KW-0324">Glycolysis</keyword>
<keyword id="KW-0418">Kinase</keyword>
<keyword id="KW-0547">Nucleotide-binding</keyword>
<keyword id="KW-1185">Reference proteome</keyword>
<keyword id="KW-0808">Transferase</keyword>
<reference key="1">
    <citation type="submission" date="2006-08" db="EMBL/GenBank/DDBJ databases">
        <title>Complete sequence of Maricaulis maris MCS10.</title>
        <authorList>
            <consortium name="US DOE Joint Genome Institute"/>
            <person name="Copeland A."/>
            <person name="Lucas S."/>
            <person name="Lapidus A."/>
            <person name="Barry K."/>
            <person name="Detter J.C."/>
            <person name="Glavina del Rio T."/>
            <person name="Hammon N."/>
            <person name="Israni S."/>
            <person name="Dalin E."/>
            <person name="Tice H."/>
            <person name="Pitluck S."/>
            <person name="Saunders E."/>
            <person name="Brettin T."/>
            <person name="Bruce D."/>
            <person name="Han C."/>
            <person name="Tapia R."/>
            <person name="Gilna P."/>
            <person name="Schmutz J."/>
            <person name="Larimer F."/>
            <person name="Land M."/>
            <person name="Hauser L."/>
            <person name="Kyrpides N."/>
            <person name="Mikhailova N."/>
            <person name="Viollier P."/>
            <person name="Stephens C."/>
            <person name="Richardson P."/>
        </authorList>
    </citation>
    <scope>NUCLEOTIDE SEQUENCE [LARGE SCALE GENOMIC DNA]</scope>
    <source>
        <strain>MCS10</strain>
    </source>
</reference>
<accession>Q0ALG1</accession>
<dbReference type="EC" id="2.7.2.3" evidence="1"/>
<dbReference type="EMBL" id="CP000449">
    <property type="protein sequence ID" value="ABI66882.1"/>
    <property type="molecule type" value="Genomic_DNA"/>
</dbReference>
<dbReference type="RefSeq" id="WP_011644526.1">
    <property type="nucleotide sequence ID" value="NC_008347.1"/>
</dbReference>
<dbReference type="SMR" id="Q0ALG1"/>
<dbReference type="STRING" id="394221.Mmar10_2596"/>
<dbReference type="KEGG" id="mmr:Mmar10_2596"/>
<dbReference type="eggNOG" id="COG0126">
    <property type="taxonomic scope" value="Bacteria"/>
</dbReference>
<dbReference type="HOGENOM" id="CLU_025427_0_2_5"/>
<dbReference type="OrthoDB" id="9808460at2"/>
<dbReference type="UniPathway" id="UPA00109">
    <property type="reaction ID" value="UER00185"/>
</dbReference>
<dbReference type="Proteomes" id="UP000001964">
    <property type="component" value="Chromosome"/>
</dbReference>
<dbReference type="GO" id="GO:0005829">
    <property type="term" value="C:cytosol"/>
    <property type="evidence" value="ECO:0007669"/>
    <property type="project" value="TreeGrafter"/>
</dbReference>
<dbReference type="GO" id="GO:0043531">
    <property type="term" value="F:ADP binding"/>
    <property type="evidence" value="ECO:0007669"/>
    <property type="project" value="TreeGrafter"/>
</dbReference>
<dbReference type="GO" id="GO:0005524">
    <property type="term" value="F:ATP binding"/>
    <property type="evidence" value="ECO:0007669"/>
    <property type="project" value="UniProtKB-KW"/>
</dbReference>
<dbReference type="GO" id="GO:0004618">
    <property type="term" value="F:phosphoglycerate kinase activity"/>
    <property type="evidence" value="ECO:0007669"/>
    <property type="project" value="UniProtKB-UniRule"/>
</dbReference>
<dbReference type="GO" id="GO:0006094">
    <property type="term" value="P:gluconeogenesis"/>
    <property type="evidence" value="ECO:0007669"/>
    <property type="project" value="TreeGrafter"/>
</dbReference>
<dbReference type="GO" id="GO:0006096">
    <property type="term" value="P:glycolytic process"/>
    <property type="evidence" value="ECO:0007669"/>
    <property type="project" value="UniProtKB-UniRule"/>
</dbReference>
<dbReference type="FunFam" id="3.40.50.1260:FF:000006">
    <property type="entry name" value="Phosphoglycerate kinase"/>
    <property type="match status" value="1"/>
</dbReference>
<dbReference type="FunFam" id="3.40.50.1260:FF:000031">
    <property type="entry name" value="Phosphoglycerate kinase 1"/>
    <property type="match status" value="1"/>
</dbReference>
<dbReference type="Gene3D" id="3.40.50.1260">
    <property type="entry name" value="Phosphoglycerate kinase, N-terminal domain"/>
    <property type="match status" value="2"/>
</dbReference>
<dbReference type="HAMAP" id="MF_00145">
    <property type="entry name" value="Phosphoglyc_kinase"/>
    <property type="match status" value="1"/>
</dbReference>
<dbReference type="InterPro" id="IPR001576">
    <property type="entry name" value="Phosphoglycerate_kinase"/>
</dbReference>
<dbReference type="InterPro" id="IPR015911">
    <property type="entry name" value="Phosphoglycerate_kinase_CS"/>
</dbReference>
<dbReference type="InterPro" id="IPR015824">
    <property type="entry name" value="Phosphoglycerate_kinase_N"/>
</dbReference>
<dbReference type="InterPro" id="IPR036043">
    <property type="entry name" value="Phosphoglycerate_kinase_sf"/>
</dbReference>
<dbReference type="PANTHER" id="PTHR11406">
    <property type="entry name" value="PHOSPHOGLYCERATE KINASE"/>
    <property type="match status" value="1"/>
</dbReference>
<dbReference type="PANTHER" id="PTHR11406:SF23">
    <property type="entry name" value="PHOSPHOGLYCERATE KINASE 1, CHLOROPLASTIC-RELATED"/>
    <property type="match status" value="1"/>
</dbReference>
<dbReference type="Pfam" id="PF00162">
    <property type="entry name" value="PGK"/>
    <property type="match status" value="1"/>
</dbReference>
<dbReference type="PIRSF" id="PIRSF000724">
    <property type="entry name" value="Pgk"/>
    <property type="match status" value="1"/>
</dbReference>
<dbReference type="PRINTS" id="PR00477">
    <property type="entry name" value="PHGLYCKINASE"/>
</dbReference>
<dbReference type="SUPFAM" id="SSF53748">
    <property type="entry name" value="Phosphoglycerate kinase"/>
    <property type="match status" value="1"/>
</dbReference>
<dbReference type="PROSITE" id="PS00111">
    <property type="entry name" value="PGLYCERATE_KINASE"/>
    <property type="match status" value="1"/>
</dbReference>
<sequence>MTEIRRIQDADVAGKRVLVRVDFNVPMKDGQVTDATRLEAALPTIEYLTEAGAKVVLLAHFGRPKGAVVPEMSLEAVCQPLADLLGDAVYFSTVTSGEDAVAATMDLEAGEVLLIENTRFAAGEETNDPGFAAALAELGDLYVNDAFSAAHRAHASTEGITHHLPSYAGLALQREIDHLVAALESPKRPVIALVGGAKVSTKIDLLQNLVKKVDTLFVGGGMANTLLHAQGIKVGSSLCETDLVDTARAIFAAAEESGCKLMLPTDVVLAKEFKPNPETRLAAVTDVEDNEMILDCGPATVVALGQAIDRSATLIWNGPLGAFETPPFDAATVEAAKYAARAAVEGELIAVAGGGDTVSALNQAGVSGDFTFISTAGGAFLEWMEGKTLPGIAAVMGTPELVA</sequence>